<protein>
    <recommendedName>
        <fullName evidence="1">Glutamyl-tRNA reductase</fullName>
        <shortName evidence="1">GluTR</shortName>
        <ecNumber evidence="1">1.2.1.70</ecNumber>
    </recommendedName>
</protein>
<dbReference type="EC" id="1.2.1.70" evidence="1"/>
<dbReference type="EMBL" id="AE008923">
    <property type="protein sequence ID" value="AAM35833.1"/>
    <property type="molecule type" value="Genomic_DNA"/>
</dbReference>
<dbReference type="SMR" id="Q8PNU4"/>
<dbReference type="KEGG" id="xac:XAC0945"/>
<dbReference type="eggNOG" id="COG0373">
    <property type="taxonomic scope" value="Bacteria"/>
</dbReference>
<dbReference type="HOGENOM" id="CLU_035113_2_2_6"/>
<dbReference type="UniPathway" id="UPA00251">
    <property type="reaction ID" value="UER00316"/>
</dbReference>
<dbReference type="Proteomes" id="UP000000576">
    <property type="component" value="Chromosome"/>
</dbReference>
<dbReference type="GO" id="GO:0008883">
    <property type="term" value="F:glutamyl-tRNA reductase activity"/>
    <property type="evidence" value="ECO:0007669"/>
    <property type="project" value="UniProtKB-UniRule"/>
</dbReference>
<dbReference type="GO" id="GO:0050661">
    <property type="term" value="F:NADP binding"/>
    <property type="evidence" value="ECO:0007669"/>
    <property type="project" value="InterPro"/>
</dbReference>
<dbReference type="GO" id="GO:0019353">
    <property type="term" value="P:protoporphyrinogen IX biosynthetic process from glutamate"/>
    <property type="evidence" value="ECO:0007669"/>
    <property type="project" value="TreeGrafter"/>
</dbReference>
<dbReference type="CDD" id="cd05213">
    <property type="entry name" value="NAD_bind_Glutamyl_tRNA_reduct"/>
    <property type="match status" value="1"/>
</dbReference>
<dbReference type="FunFam" id="3.30.460.30:FF:000001">
    <property type="entry name" value="Glutamyl-tRNA reductase"/>
    <property type="match status" value="1"/>
</dbReference>
<dbReference type="FunFam" id="3.40.50.720:FF:000031">
    <property type="entry name" value="Glutamyl-tRNA reductase"/>
    <property type="match status" value="1"/>
</dbReference>
<dbReference type="Gene3D" id="3.30.460.30">
    <property type="entry name" value="Glutamyl-tRNA reductase, N-terminal domain"/>
    <property type="match status" value="1"/>
</dbReference>
<dbReference type="Gene3D" id="3.40.50.720">
    <property type="entry name" value="NAD(P)-binding Rossmann-like Domain"/>
    <property type="match status" value="1"/>
</dbReference>
<dbReference type="HAMAP" id="MF_00087">
    <property type="entry name" value="Glu_tRNA_reductase"/>
    <property type="match status" value="1"/>
</dbReference>
<dbReference type="InterPro" id="IPR000343">
    <property type="entry name" value="4pyrrol_synth_GluRdtase"/>
</dbReference>
<dbReference type="InterPro" id="IPR015896">
    <property type="entry name" value="4pyrrol_synth_GluRdtase_dimer"/>
</dbReference>
<dbReference type="InterPro" id="IPR015895">
    <property type="entry name" value="4pyrrol_synth_GluRdtase_N"/>
</dbReference>
<dbReference type="InterPro" id="IPR018214">
    <property type="entry name" value="GluRdtase_CS"/>
</dbReference>
<dbReference type="InterPro" id="IPR036453">
    <property type="entry name" value="GluRdtase_dimer_dom_sf"/>
</dbReference>
<dbReference type="InterPro" id="IPR036343">
    <property type="entry name" value="GluRdtase_N_sf"/>
</dbReference>
<dbReference type="InterPro" id="IPR036291">
    <property type="entry name" value="NAD(P)-bd_dom_sf"/>
</dbReference>
<dbReference type="InterPro" id="IPR006151">
    <property type="entry name" value="Shikm_DH/Glu-tRNA_Rdtase"/>
</dbReference>
<dbReference type="NCBIfam" id="TIGR01035">
    <property type="entry name" value="hemA"/>
    <property type="match status" value="1"/>
</dbReference>
<dbReference type="PANTHER" id="PTHR43013">
    <property type="entry name" value="GLUTAMYL-TRNA REDUCTASE"/>
    <property type="match status" value="1"/>
</dbReference>
<dbReference type="PANTHER" id="PTHR43013:SF1">
    <property type="entry name" value="GLUTAMYL-TRNA REDUCTASE"/>
    <property type="match status" value="1"/>
</dbReference>
<dbReference type="Pfam" id="PF00745">
    <property type="entry name" value="GlutR_dimer"/>
    <property type="match status" value="1"/>
</dbReference>
<dbReference type="Pfam" id="PF05201">
    <property type="entry name" value="GlutR_N"/>
    <property type="match status" value="1"/>
</dbReference>
<dbReference type="Pfam" id="PF01488">
    <property type="entry name" value="Shikimate_DH"/>
    <property type="match status" value="1"/>
</dbReference>
<dbReference type="PIRSF" id="PIRSF000445">
    <property type="entry name" value="4pyrrol_synth_GluRdtase"/>
    <property type="match status" value="1"/>
</dbReference>
<dbReference type="SUPFAM" id="SSF69742">
    <property type="entry name" value="Glutamyl tRNA-reductase catalytic, N-terminal domain"/>
    <property type="match status" value="1"/>
</dbReference>
<dbReference type="SUPFAM" id="SSF69075">
    <property type="entry name" value="Glutamyl tRNA-reductase dimerization domain"/>
    <property type="match status" value="1"/>
</dbReference>
<dbReference type="SUPFAM" id="SSF51735">
    <property type="entry name" value="NAD(P)-binding Rossmann-fold domains"/>
    <property type="match status" value="1"/>
</dbReference>
<dbReference type="PROSITE" id="PS00747">
    <property type="entry name" value="GLUTR"/>
    <property type="match status" value="1"/>
</dbReference>
<organism>
    <name type="scientific">Xanthomonas axonopodis pv. citri (strain 306)</name>
    <dbReference type="NCBI Taxonomy" id="190486"/>
    <lineage>
        <taxon>Bacteria</taxon>
        <taxon>Pseudomonadati</taxon>
        <taxon>Pseudomonadota</taxon>
        <taxon>Gammaproteobacteria</taxon>
        <taxon>Lysobacterales</taxon>
        <taxon>Lysobacteraceae</taxon>
        <taxon>Xanthomonas</taxon>
    </lineage>
</organism>
<reference key="1">
    <citation type="journal article" date="2002" name="Nature">
        <title>Comparison of the genomes of two Xanthomonas pathogens with differing host specificities.</title>
        <authorList>
            <person name="da Silva A.C.R."/>
            <person name="Ferro J.A."/>
            <person name="Reinach F.C."/>
            <person name="Farah C.S."/>
            <person name="Furlan L.R."/>
            <person name="Quaggio R.B."/>
            <person name="Monteiro-Vitorello C.B."/>
            <person name="Van Sluys M.A."/>
            <person name="Almeida N.F. Jr."/>
            <person name="Alves L.M.C."/>
            <person name="do Amaral A.M."/>
            <person name="Bertolini M.C."/>
            <person name="Camargo L.E.A."/>
            <person name="Camarotte G."/>
            <person name="Cannavan F."/>
            <person name="Cardozo J."/>
            <person name="Chambergo F."/>
            <person name="Ciapina L.P."/>
            <person name="Cicarelli R.M.B."/>
            <person name="Coutinho L.L."/>
            <person name="Cursino-Santos J.R."/>
            <person name="El-Dorry H."/>
            <person name="Faria J.B."/>
            <person name="Ferreira A.J.S."/>
            <person name="Ferreira R.C.C."/>
            <person name="Ferro M.I.T."/>
            <person name="Formighieri E.F."/>
            <person name="Franco M.C."/>
            <person name="Greggio C.C."/>
            <person name="Gruber A."/>
            <person name="Katsuyama A.M."/>
            <person name="Kishi L.T."/>
            <person name="Leite R.P."/>
            <person name="Lemos E.G.M."/>
            <person name="Lemos M.V.F."/>
            <person name="Locali E.C."/>
            <person name="Machado M.A."/>
            <person name="Madeira A.M.B.N."/>
            <person name="Martinez-Rossi N.M."/>
            <person name="Martins E.C."/>
            <person name="Meidanis J."/>
            <person name="Menck C.F.M."/>
            <person name="Miyaki C.Y."/>
            <person name="Moon D.H."/>
            <person name="Moreira L.M."/>
            <person name="Novo M.T.M."/>
            <person name="Okura V.K."/>
            <person name="Oliveira M.C."/>
            <person name="Oliveira V.R."/>
            <person name="Pereira H.A."/>
            <person name="Rossi A."/>
            <person name="Sena J.A.D."/>
            <person name="Silva C."/>
            <person name="de Souza R.F."/>
            <person name="Spinola L.A.F."/>
            <person name="Takita M.A."/>
            <person name="Tamura R.E."/>
            <person name="Teixeira E.C."/>
            <person name="Tezza R.I.D."/>
            <person name="Trindade dos Santos M."/>
            <person name="Truffi D."/>
            <person name="Tsai S.M."/>
            <person name="White F.F."/>
            <person name="Setubal J.C."/>
            <person name="Kitajima J.P."/>
        </authorList>
    </citation>
    <scope>NUCLEOTIDE SEQUENCE [LARGE SCALE GENOMIC DNA]</scope>
    <source>
        <strain>306</strain>
    </source>
</reference>
<comment type="function">
    <text evidence="1">Catalyzes the NADPH-dependent reduction of glutamyl-tRNA(Glu) to glutamate 1-semialdehyde (GSA).</text>
</comment>
<comment type="catalytic activity">
    <reaction evidence="1">
        <text>(S)-4-amino-5-oxopentanoate + tRNA(Glu) + NADP(+) = L-glutamyl-tRNA(Glu) + NADPH + H(+)</text>
        <dbReference type="Rhea" id="RHEA:12344"/>
        <dbReference type="Rhea" id="RHEA-COMP:9663"/>
        <dbReference type="Rhea" id="RHEA-COMP:9680"/>
        <dbReference type="ChEBI" id="CHEBI:15378"/>
        <dbReference type="ChEBI" id="CHEBI:57501"/>
        <dbReference type="ChEBI" id="CHEBI:57783"/>
        <dbReference type="ChEBI" id="CHEBI:58349"/>
        <dbReference type="ChEBI" id="CHEBI:78442"/>
        <dbReference type="ChEBI" id="CHEBI:78520"/>
        <dbReference type="EC" id="1.2.1.70"/>
    </reaction>
</comment>
<comment type="pathway">
    <text evidence="1">Porphyrin-containing compound metabolism; protoporphyrin-IX biosynthesis; 5-aminolevulinate from L-glutamyl-tRNA(Glu): step 1/2.</text>
</comment>
<comment type="subunit">
    <text evidence="1">Homodimer.</text>
</comment>
<comment type="domain">
    <text evidence="1">Possesses an unusual extended V-shaped dimeric structure with each monomer consisting of three distinct domains arranged along a curved 'spinal' alpha-helix. The N-terminal catalytic domain specifically recognizes the glutamate moiety of the substrate. The second domain is the NADPH-binding domain, and the third C-terminal domain is responsible for dimerization.</text>
</comment>
<comment type="miscellaneous">
    <text evidence="1">During catalysis, the active site Cys acts as a nucleophile attacking the alpha-carbonyl group of tRNA-bound glutamate with the formation of a thioester intermediate between enzyme and glutamate, and the concomitant release of tRNA(Glu). The thioester intermediate is finally reduced by direct hydride transfer from NADPH, to form the product GSA.</text>
</comment>
<comment type="similarity">
    <text evidence="1">Belongs to the glutamyl-tRNA reductase family.</text>
</comment>
<feature type="chain" id="PRO_0000114089" description="Glutamyl-tRNA reductase">
    <location>
        <begin position="1"/>
        <end position="426"/>
    </location>
</feature>
<feature type="region of interest" description="Disordered" evidence="2">
    <location>
        <begin position="405"/>
        <end position="426"/>
    </location>
</feature>
<feature type="active site" description="Nucleophile" evidence="1">
    <location>
        <position position="50"/>
    </location>
</feature>
<feature type="binding site" evidence="1">
    <location>
        <begin position="49"/>
        <end position="52"/>
    </location>
    <ligand>
        <name>substrate</name>
    </ligand>
</feature>
<feature type="binding site" evidence="1">
    <location>
        <position position="101"/>
    </location>
    <ligand>
        <name>substrate</name>
    </ligand>
</feature>
<feature type="binding site" evidence="1">
    <location>
        <begin position="106"/>
        <end position="108"/>
    </location>
    <ligand>
        <name>substrate</name>
    </ligand>
</feature>
<feature type="binding site" evidence="1">
    <location>
        <position position="112"/>
    </location>
    <ligand>
        <name>substrate</name>
    </ligand>
</feature>
<feature type="binding site" evidence="1">
    <location>
        <begin position="181"/>
        <end position="186"/>
    </location>
    <ligand>
        <name>NADP(+)</name>
        <dbReference type="ChEBI" id="CHEBI:58349"/>
    </ligand>
</feature>
<feature type="site" description="Important for activity" evidence="1">
    <location>
        <position position="91"/>
    </location>
</feature>
<evidence type="ECO:0000255" key="1">
    <source>
        <dbReference type="HAMAP-Rule" id="MF_00087"/>
    </source>
</evidence>
<evidence type="ECO:0000256" key="2">
    <source>
        <dbReference type="SAM" id="MobiDB-lite"/>
    </source>
</evidence>
<proteinExistence type="inferred from homology"/>
<name>HEM1_XANAC</name>
<accession>Q8PNU4</accession>
<sequence>MTLWVLGLNHQTAPVDLRERAAFAGDALPRALESLRALPQVSEAALLSTCNRTELYAMAEEAHSLVNWLETHAPGLSGYLYQHQEAEAVRHLFRVATGLDSMVLGEPQILGQVKDAWAVARAHGALGSGLDRLFQQTFSVAKRARTDTRVGANPVSVASTAVRLAQDSFARLNESTVLLIGAGETIELAAKHLSEGRVRRLLIANRTLAHAQTLASQHGGFALPLTDLERHLAEADVVFSATAAREPLVTRVQVEQALRARKRKPMLLFDLAVPRDIEASVGELSDAYLYTVDDLERAVEDNRRGRREAADQAEAIIDLQVARYVETLQATAHQAPLKRLRAFGDSTRDELLAKARQQLHNGKPADEVLEQLAHALTNRLLHPPTAALRDAALNNDLELTAAADRLFPEKPGYQHPPHSYPDREDR</sequence>
<gene>
    <name evidence="1" type="primary">hemA</name>
    <name type="ordered locus">XAC0945</name>
</gene>
<keyword id="KW-0521">NADP</keyword>
<keyword id="KW-0560">Oxidoreductase</keyword>
<keyword id="KW-0627">Porphyrin biosynthesis</keyword>